<keyword id="KW-0249">Electron transport</keyword>
<keyword id="KW-0349">Heme</keyword>
<keyword id="KW-0408">Iron</keyword>
<keyword id="KW-0472">Membrane</keyword>
<keyword id="KW-0479">Metal-binding</keyword>
<keyword id="KW-0496">Mitochondrion</keyword>
<keyword id="KW-0999">Mitochondrion inner membrane</keyword>
<keyword id="KW-0679">Respiratory chain</keyword>
<keyword id="KW-0812">Transmembrane</keyword>
<keyword id="KW-1133">Transmembrane helix</keyword>
<keyword id="KW-0813">Transport</keyword>
<keyword id="KW-0830">Ubiquinone</keyword>
<name>CYB_MURME</name>
<organism>
    <name type="scientific">Murexechinus melanurus</name>
    <name type="common">Black-tailed dasyure</name>
    <name type="synonym">Antechinus melanurus</name>
    <dbReference type="NCBI Taxonomy" id="418663"/>
    <lineage>
        <taxon>Eukaryota</taxon>
        <taxon>Metazoa</taxon>
        <taxon>Chordata</taxon>
        <taxon>Craniata</taxon>
        <taxon>Vertebrata</taxon>
        <taxon>Euteleostomi</taxon>
        <taxon>Mammalia</taxon>
        <taxon>Metatheria</taxon>
        <taxon>Dasyuromorphia</taxon>
        <taxon>Dasyuridae</taxon>
        <taxon>Murexia</taxon>
    </lineage>
</organism>
<comment type="function">
    <text evidence="2">Component of the ubiquinol-cytochrome c reductase complex (complex III or cytochrome b-c1 complex) that is part of the mitochondrial respiratory chain. The b-c1 complex mediates electron transfer from ubiquinol to cytochrome c. Contributes to the generation of a proton gradient across the mitochondrial membrane that is then used for ATP synthesis.</text>
</comment>
<comment type="cofactor">
    <cofactor evidence="2">
        <name>heme b</name>
        <dbReference type="ChEBI" id="CHEBI:60344"/>
    </cofactor>
    <text evidence="2">Binds 2 heme b groups non-covalently.</text>
</comment>
<comment type="subunit">
    <text evidence="2">The cytochrome bc1 complex contains 11 subunits: 3 respiratory subunits (MT-CYB, CYC1 and UQCRFS1), 2 core proteins (UQCRC1 and UQCRC2) and 6 low-molecular weight proteins (UQCRH/QCR6, UQCRB/QCR7, UQCRQ/QCR8, UQCR10/QCR9, UQCR11/QCR10 and a cleavage product of UQCRFS1). This cytochrome bc1 complex then forms a dimer.</text>
</comment>
<comment type="subcellular location">
    <subcellularLocation>
        <location evidence="2">Mitochondrion inner membrane</location>
        <topology evidence="2">Multi-pass membrane protein</topology>
    </subcellularLocation>
</comment>
<comment type="miscellaneous">
    <text evidence="1">Heme 1 (or BL or b562) is low-potential and absorbs at about 562 nm, and heme 2 (or BH or b566) is high-potential and absorbs at about 566 nm.</text>
</comment>
<comment type="similarity">
    <text evidence="3 4">Belongs to the cytochrome b family.</text>
</comment>
<comment type="caution">
    <text evidence="2">The full-length protein contains only eight transmembrane helices, not nine as predicted by bioinformatics tools.</text>
</comment>
<feature type="chain" id="PRO_0000060596" description="Cytochrome b">
    <location>
        <begin position="1"/>
        <end position="381"/>
    </location>
</feature>
<feature type="transmembrane region" description="Helical" evidence="2">
    <location>
        <begin position="33"/>
        <end position="53"/>
    </location>
</feature>
<feature type="transmembrane region" description="Helical" evidence="2">
    <location>
        <begin position="77"/>
        <end position="98"/>
    </location>
</feature>
<feature type="transmembrane region" description="Helical" evidence="2">
    <location>
        <begin position="113"/>
        <end position="133"/>
    </location>
</feature>
<feature type="transmembrane region" description="Helical" evidence="2">
    <location>
        <begin position="178"/>
        <end position="198"/>
    </location>
</feature>
<feature type="transmembrane region" description="Helical" evidence="2">
    <location>
        <begin position="226"/>
        <end position="246"/>
    </location>
</feature>
<feature type="transmembrane region" description="Helical" evidence="2">
    <location>
        <begin position="288"/>
        <end position="308"/>
    </location>
</feature>
<feature type="transmembrane region" description="Helical" evidence="2">
    <location>
        <begin position="320"/>
        <end position="340"/>
    </location>
</feature>
<feature type="transmembrane region" description="Helical" evidence="2">
    <location>
        <begin position="347"/>
        <end position="367"/>
    </location>
</feature>
<feature type="binding site" description="axial binding residue" evidence="2">
    <location>
        <position position="83"/>
    </location>
    <ligand>
        <name>heme b</name>
        <dbReference type="ChEBI" id="CHEBI:60344"/>
        <label>b562</label>
    </ligand>
    <ligandPart>
        <name>Fe</name>
        <dbReference type="ChEBI" id="CHEBI:18248"/>
    </ligandPart>
</feature>
<feature type="binding site" description="axial binding residue" evidence="2">
    <location>
        <position position="97"/>
    </location>
    <ligand>
        <name>heme b</name>
        <dbReference type="ChEBI" id="CHEBI:60344"/>
        <label>b566</label>
    </ligand>
    <ligandPart>
        <name>Fe</name>
        <dbReference type="ChEBI" id="CHEBI:18248"/>
    </ligandPart>
</feature>
<feature type="binding site" description="axial binding residue" evidence="2">
    <location>
        <position position="182"/>
    </location>
    <ligand>
        <name>heme b</name>
        <dbReference type="ChEBI" id="CHEBI:60344"/>
        <label>b562</label>
    </ligand>
    <ligandPart>
        <name>Fe</name>
        <dbReference type="ChEBI" id="CHEBI:18248"/>
    </ligandPart>
</feature>
<feature type="binding site" description="axial binding residue" evidence="2">
    <location>
        <position position="196"/>
    </location>
    <ligand>
        <name>heme b</name>
        <dbReference type="ChEBI" id="CHEBI:60344"/>
        <label>b566</label>
    </ligand>
    <ligandPart>
        <name>Fe</name>
        <dbReference type="ChEBI" id="CHEBI:18248"/>
    </ligandPart>
</feature>
<feature type="binding site" evidence="2">
    <location>
        <position position="201"/>
    </location>
    <ligand>
        <name>a ubiquinone</name>
        <dbReference type="ChEBI" id="CHEBI:16389"/>
    </ligand>
</feature>
<gene>
    <name type="primary">MT-CYB</name>
    <name type="synonym">COB</name>
    <name type="synonym">CYTB</name>
    <name type="synonym">MTCYB</name>
</gene>
<proteinExistence type="inferred from homology"/>
<geneLocation type="mitochondrion"/>
<dbReference type="EMBL" id="U07577">
    <property type="protein sequence ID" value="AAB88755.1"/>
    <property type="molecule type" value="Genomic_DNA"/>
</dbReference>
<dbReference type="SMR" id="Q33782"/>
<dbReference type="GO" id="GO:0005743">
    <property type="term" value="C:mitochondrial inner membrane"/>
    <property type="evidence" value="ECO:0007669"/>
    <property type="project" value="UniProtKB-SubCell"/>
</dbReference>
<dbReference type="GO" id="GO:0045275">
    <property type="term" value="C:respiratory chain complex III"/>
    <property type="evidence" value="ECO:0007669"/>
    <property type="project" value="InterPro"/>
</dbReference>
<dbReference type="GO" id="GO:0046872">
    <property type="term" value="F:metal ion binding"/>
    <property type="evidence" value="ECO:0007669"/>
    <property type="project" value="UniProtKB-KW"/>
</dbReference>
<dbReference type="GO" id="GO:0008121">
    <property type="term" value="F:ubiquinol-cytochrome-c reductase activity"/>
    <property type="evidence" value="ECO:0007669"/>
    <property type="project" value="InterPro"/>
</dbReference>
<dbReference type="GO" id="GO:0006122">
    <property type="term" value="P:mitochondrial electron transport, ubiquinol to cytochrome c"/>
    <property type="evidence" value="ECO:0007669"/>
    <property type="project" value="TreeGrafter"/>
</dbReference>
<dbReference type="CDD" id="cd00290">
    <property type="entry name" value="cytochrome_b_C"/>
    <property type="match status" value="1"/>
</dbReference>
<dbReference type="CDD" id="cd00284">
    <property type="entry name" value="Cytochrome_b_N"/>
    <property type="match status" value="1"/>
</dbReference>
<dbReference type="FunFam" id="1.20.810.10:FF:000002">
    <property type="entry name" value="Cytochrome b"/>
    <property type="match status" value="1"/>
</dbReference>
<dbReference type="Gene3D" id="1.20.810.10">
    <property type="entry name" value="Cytochrome Bc1 Complex, Chain C"/>
    <property type="match status" value="1"/>
</dbReference>
<dbReference type="InterPro" id="IPR005798">
    <property type="entry name" value="Cyt_b/b6_C"/>
</dbReference>
<dbReference type="InterPro" id="IPR036150">
    <property type="entry name" value="Cyt_b/b6_C_sf"/>
</dbReference>
<dbReference type="InterPro" id="IPR005797">
    <property type="entry name" value="Cyt_b/b6_N"/>
</dbReference>
<dbReference type="InterPro" id="IPR027387">
    <property type="entry name" value="Cytb/b6-like_sf"/>
</dbReference>
<dbReference type="InterPro" id="IPR030689">
    <property type="entry name" value="Cytochrome_b"/>
</dbReference>
<dbReference type="InterPro" id="IPR048260">
    <property type="entry name" value="Cytochrome_b_C_euk/bac"/>
</dbReference>
<dbReference type="InterPro" id="IPR048259">
    <property type="entry name" value="Cytochrome_b_N_euk/bac"/>
</dbReference>
<dbReference type="InterPro" id="IPR016174">
    <property type="entry name" value="Di-haem_cyt_TM"/>
</dbReference>
<dbReference type="PANTHER" id="PTHR19271">
    <property type="entry name" value="CYTOCHROME B"/>
    <property type="match status" value="1"/>
</dbReference>
<dbReference type="PANTHER" id="PTHR19271:SF16">
    <property type="entry name" value="CYTOCHROME B"/>
    <property type="match status" value="1"/>
</dbReference>
<dbReference type="Pfam" id="PF00032">
    <property type="entry name" value="Cytochrom_B_C"/>
    <property type="match status" value="1"/>
</dbReference>
<dbReference type="Pfam" id="PF00033">
    <property type="entry name" value="Cytochrome_B"/>
    <property type="match status" value="1"/>
</dbReference>
<dbReference type="PIRSF" id="PIRSF038885">
    <property type="entry name" value="COB"/>
    <property type="match status" value="1"/>
</dbReference>
<dbReference type="SUPFAM" id="SSF81648">
    <property type="entry name" value="a domain/subunit of cytochrome bc1 complex (Ubiquinol-cytochrome c reductase)"/>
    <property type="match status" value="1"/>
</dbReference>
<dbReference type="SUPFAM" id="SSF81342">
    <property type="entry name" value="Transmembrane di-heme cytochromes"/>
    <property type="match status" value="1"/>
</dbReference>
<dbReference type="PROSITE" id="PS51003">
    <property type="entry name" value="CYTB_CTER"/>
    <property type="match status" value="1"/>
</dbReference>
<dbReference type="PROSITE" id="PS51002">
    <property type="entry name" value="CYTB_NTER"/>
    <property type="match status" value="1"/>
</dbReference>
<sequence>MINLRKTHPLMKIINQSFIDLPAPSNISAWWNFGSLLGACLIIQILTGFFLAMHYTSDTLTAFSSVAHICRDVNYGWLIRNIHANGASMFFMCLFLHIGRGIYYGSYLYKETWNIGVILLLTVMATAFVGYVLPWGQMSFWGATVITNLLSAIPYIGTTLAEWVWGGFAVDKATLTRFFAFHFILPFIITALALVHLLFLHETGSNNPSGINPDSDKIPFHPYYTIKDALGMTLLLLMLLLLALFSPDSLGDPDNFSPANPLNTPPHIKPEWYFLFAYAILRSIPNKLGGVLALLASILVLLIIPLLHTANQRSMMFRPISQTLFWILTANLITLTWIGGQPVEQPFIIIGQLASILYFLLILVLMPLAGLFENYMLKPKW</sequence>
<accession>Q33782</accession>
<protein>
    <recommendedName>
        <fullName>Cytochrome b</fullName>
    </recommendedName>
    <alternativeName>
        <fullName>Complex III subunit 3</fullName>
    </alternativeName>
    <alternativeName>
        <fullName>Complex III subunit III</fullName>
    </alternativeName>
    <alternativeName>
        <fullName>Cytochrome b-c1 complex subunit 3</fullName>
    </alternativeName>
    <alternativeName>
        <fullName>Ubiquinol-cytochrome-c reductase complex cytochrome b subunit</fullName>
    </alternativeName>
</protein>
<evidence type="ECO:0000250" key="1"/>
<evidence type="ECO:0000250" key="2">
    <source>
        <dbReference type="UniProtKB" id="P00157"/>
    </source>
</evidence>
<evidence type="ECO:0000255" key="3">
    <source>
        <dbReference type="PROSITE-ProRule" id="PRU00967"/>
    </source>
</evidence>
<evidence type="ECO:0000255" key="4">
    <source>
        <dbReference type="PROSITE-ProRule" id="PRU00968"/>
    </source>
</evidence>
<reference key="1">
    <citation type="journal article" date="1994" name="J. Mammal. Evol.">
        <title>Phylogenetic structure of the marsupial family Dasyuridae based on cytochrome-b DNA sequences.</title>
        <authorList>
            <person name="Krajewski C."/>
            <person name="Painter J."/>
            <person name="Buckley L."/>
            <person name="Westerman M."/>
        </authorList>
    </citation>
    <scope>NUCLEOTIDE SEQUENCE [GENOMIC DNA]</scope>
</reference>